<reference key="1">
    <citation type="journal article" date="2011" name="PLoS Genet.">
        <title>Genomic analysis of the necrotrophic fungal pathogens Sclerotinia sclerotiorum and Botrytis cinerea.</title>
        <authorList>
            <person name="Amselem J."/>
            <person name="Cuomo C.A."/>
            <person name="van Kan J.A.L."/>
            <person name="Viaud M."/>
            <person name="Benito E.P."/>
            <person name="Couloux A."/>
            <person name="Coutinho P.M."/>
            <person name="de Vries R.P."/>
            <person name="Dyer P.S."/>
            <person name="Fillinger S."/>
            <person name="Fournier E."/>
            <person name="Gout L."/>
            <person name="Hahn M."/>
            <person name="Kohn L."/>
            <person name="Lapalu N."/>
            <person name="Plummer K.M."/>
            <person name="Pradier J.-M."/>
            <person name="Quevillon E."/>
            <person name="Sharon A."/>
            <person name="Simon A."/>
            <person name="ten Have A."/>
            <person name="Tudzynski B."/>
            <person name="Tudzynski P."/>
            <person name="Wincker P."/>
            <person name="Andrew M."/>
            <person name="Anthouard V."/>
            <person name="Beever R.E."/>
            <person name="Beffa R."/>
            <person name="Benoit I."/>
            <person name="Bouzid O."/>
            <person name="Brault B."/>
            <person name="Chen Z."/>
            <person name="Choquer M."/>
            <person name="Collemare J."/>
            <person name="Cotton P."/>
            <person name="Danchin E.G."/>
            <person name="Da Silva C."/>
            <person name="Gautier A."/>
            <person name="Giraud C."/>
            <person name="Giraud T."/>
            <person name="Gonzalez C."/>
            <person name="Grossetete S."/>
            <person name="Gueldener U."/>
            <person name="Henrissat B."/>
            <person name="Howlett B.J."/>
            <person name="Kodira C."/>
            <person name="Kretschmer M."/>
            <person name="Lappartient A."/>
            <person name="Leroch M."/>
            <person name="Levis C."/>
            <person name="Mauceli E."/>
            <person name="Neuveglise C."/>
            <person name="Oeser B."/>
            <person name="Pearson M."/>
            <person name="Poulain J."/>
            <person name="Poussereau N."/>
            <person name="Quesneville H."/>
            <person name="Rascle C."/>
            <person name="Schumacher J."/>
            <person name="Segurens B."/>
            <person name="Sexton A."/>
            <person name="Silva E."/>
            <person name="Sirven C."/>
            <person name="Soanes D.M."/>
            <person name="Talbot N.J."/>
            <person name="Templeton M."/>
            <person name="Yandava C."/>
            <person name="Yarden O."/>
            <person name="Zeng Q."/>
            <person name="Rollins J.A."/>
            <person name="Lebrun M.-H."/>
            <person name="Dickman M."/>
        </authorList>
    </citation>
    <scope>NUCLEOTIDE SEQUENCE [LARGE SCALE GENOMIC DNA]</scope>
    <source>
        <strain>B05.10</strain>
    </source>
</reference>
<reference key="2">
    <citation type="journal article" date="2012" name="Eukaryot. Cell">
        <title>Genome update of Botrytis cinerea strains B05.10 and T4.</title>
        <authorList>
            <person name="Staats M."/>
            <person name="van Kan J.A.L."/>
        </authorList>
    </citation>
    <scope>NUCLEOTIDE SEQUENCE [LARGE SCALE GENOMIC DNA]</scope>
    <source>
        <strain>B05.10</strain>
    </source>
</reference>
<reference key="3">
    <citation type="journal article" date="2017" name="Mol. Plant Pathol.">
        <title>A gapless genome sequence of the fungus Botrytis cinerea.</title>
        <authorList>
            <person name="van Kan J.A.L."/>
            <person name="Stassen J.H.M."/>
            <person name="Mosbach A."/>
            <person name="van der Lee T.A.J."/>
            <person name="Faino L."/>
            <person name="Farmer A.D."/>
            <person name="Papasotiriou D.G."/>
            <person name="Zhou S."/>
            <person name="Seidl M.F."/>
            <person name="Cottam E."/>
            <person name="Edel D."/>
            <person name="Hahn M."/>
            <person name="Schwartz D.C."/>
            <person name="Dietrich R.A."/>
            <person name="Widdison S."/>
            <person name="Scalliet G."/>
        </authorList>
    </citation>
    <scope>NUCLEOTIDE SEQUENCE [LARGE SCALE GENOMIC DNA]</scope>
    <source>
        <strain>B05.10</strain>
    </source>
</reference>
<reference key="4">
    <citation type="journal article" date="2022" name="Microbiol. Spectr.">
        <title>The Linker Region Promotes Activity and Binding Efficiency of Modular LPMO towards Polymeric Substrate.</title>
        <authorList>
            <person name="Srivastava A."/>
            <person name="Nagar P."/>
            <person name="Rathore S."/>
            <person name="Adlakha N."/>
        </authorList>
    </citation>
    <scope>IDENTIFICATION</scope>
    <scope>INDUCTION</scope>
    <scope>FUNCTION</scope>
</reference>
<evidence type="ECO:0000250" key="1">
    <source>
        <dbReference type="UniProtKB" id="G2R6N0"/>
    </source>
</evidence>
<evidence type="ECO:0000250" key="2">
    <source>
        <dbReference type="UniProtKB" id="Q1K8B6"/>
    </source>
</evidence>
<evidence type="ECO:0000250" key="3">
    <source>
        <dbReference type="UniProtKB" id="Q4WP32"/>
    </source>
</evidence>
<evidence type="ECO:0000250" key="4">
    <source>
        <dbReference type="UniProtKB" id="Q7Z9M7"/>
    </source>
</evidence>
<evidence type="ECO:0000255" key="5"/>
<evidence type="ECO:0000255" key="6">
    <source>
        <dbReference type="PROSITE-ProRule" id="PRU00498"/>
    </source>
</evidence>
<evidence type="ECO:0000269" key="7">
    <source>
    </source>
</evidence>
<evidence type="ECO:0000303" key="8">
    <source>
    </source>
</evidence>
<evidence type="ECO:0000305" key="9"/>
<evidence type="ECO:0000305" key="10">
    <source>
    </source>
</evidence>
<proteinExistence type="evidence at transcript level"/>
<feature type="signal peptide" evidence="5">
    <location>
        <begin position="1"/>
        <end position="17"/>
    </location>
</feature>
<feature type="chain" id="PRO_5016591262" description="AA9 family lytic polysaccharide monooxygenase I" evidence="5">
    <location>
        <begin position="18"/>
        <end position="269"/>
    </location>
</feature>
<feature type="binding site" evidence="1">
    <location>
        <position position="18"/>
    </location>
    <ligand>
        <name>Cu(2+)</name>
        <dbReference type="ChEBI" id="CHEBI:29036"/>
    </ligand>
</feature>
<feature type="binding site" evidence="3">
    <location>
        <position position="103"/>
    </location>
    <ligand>
        <name>Cu(2+)</name>
        <dbReference type="ChEBI" id="CHEBI:29036"/>
    </ligand>
</feature>
<feature type="binding site" evidence="2">
    <location>
        <position position="182"/>
    </location>
    <ligand>
        <name>O2</name>
        <dbReference type="ChEBI" id="CHEBI:15379"/>
    </ligand>
</feature>
<feature type="binding site" evidence="2">
    <location>
        <position position="191"/>
    </location>
    <ligand>
        <name>O2</name>
        <dbReference type="ChEBI" id="CHEBI:15379"/>
    </ligand>
</feature>
<feature type="binding site" evidence="1">
    <location>
        <position position="193"/>
    </location>
    <ligand>
        <name>Cu(2+)</name>
        <dbReference type="ChEBI" id="CHEBI:29036"/>
    </ligand>
</feature>
<feature type="glycosylation site" description="N-linked (GlcNAc...) asparagine" evidence="6">
    <location>
        <position position="156"/>
    </location>
</feature>
<feature type="disulfide bond" evidence="4">
    <location>
        <begin position="73"/>
        <end position="196"/>
    </location>
</feature>
<dbReference type="EC" id="1.14.99.56" evidence="10"/>
<dbReference type="EMBL" id="CP009806">
    <property type="protein sequence ID" value="ATZ46857.1"/>
    <property type="molecule type" value="Genomic_DNA"/>
</dbReference>
<dbReference type="RefSeq" id="XP_001558907.1">
    <property type="nucleotide sequence ID" value="XM_001558857.1"/>
</dbReference>
<dbReference type="SMR" id="A0A384J8V9"/>
<dbReference type="EnsemblFungi" id="Bcin02g02040.1">
    <property type="protein sequence ID" value="Bcin02p02040.1"/>
    <property type="gene ID" value="Bcin02g02040"/>
</dbReference>
<dbReference type="GeneID" id="5439448"/>
<dbReference type="KEGG" id="bfu:BCIN_02g02040"/>
<dbReference type="VEuPathDB" id="FungiDB:Bcin02g02040"/>
<dbReference type="OMA" id="QCVSLAI"/>
<dbReference type="OrthoDB" id="4849160at2759"/>
<dbReference type="Proteomes" id="UP000001798">
    <property type="component" value="Chromosome bcin02"/>
</dbReference>
<dbReference type="GO" id="GO:0005576">
    <property type="term" value="C:extracellular region"/>
    <property type="evidence" value="ECO:0007669"/>
    <property type="project" value="UniProtKB-SubCell"/>
</dbReference>
<dbReference type="GO" id="GO:0046872">
    <property type="term" value="F:metal ion binding"/>
    <property type="evidence" value="ECO:0007669"/>
    <property type="project" value="UniProtKB-KW"/>
</dbReference>
<dbReference type="GO" id="GO:0004497">
    <property type="term" value="F:monooxygenase activity"/>
    <property type="evidence" value="ECO:0007669"/>
    <property type="project" value="UniProtKB-KW"/>
</dbReference>
<dbReference type="GO" id="GO:0030245">
    <property type="term" value="P:cellulose catabolic process"/>
    <property type="evidence" value="ECO:0007669"/>
    <property type="project" value="UniProtKB-KW"/>
</dbReference>
<dbReference type="CDD" id="cd21175">
    <property type="entry name" value="LPMO_AA9"/>
    <property type="match status" value="1"/>
</dbReference>
<dbReference type="Gene3D" id="2.70.50.70">
    <property type="match status" value="1"/>
</dbReference>
<dbReference type="InterPro" id="IPR049892">
    <property type="entry name" value="AA9"/>
</dbReference>
<dbReference type="InterPro" id="IPR005103">
    <property type="entry name" value="AA9_LPMO"/>
</dbReference>
<dbReference type="PANTHER" id="PTHR33353:SF34">
    <property type="entry name" value="ENDO-BETA-1,4-GLUCANASE D"/>
    <property type="match status" value="1"/>
</dbReference>
<dbReference type="PANTHER" id="PTHR33353">
    <property type="entry name" value="PUTATIVE (AFU_ORTHOLOGUE AFUA_1G12560)-RELATED"/>
    <property type="match status" value="1"/>
</dbReference>
<dbReference type="Pfam" id="PF03443">
    <property type="entry name" value="AA9"/>
    <property type="match status" value="1"/>
</dbReference>
<name>LP9I_BOTFB</name>
<sequence length="269" mass="28200">MFSKKITALALVSAVKAHGTVSGIVADGIYYDGYNPSYQYTSPAPVTVGWLIPKDLDNGFISPAAYTTSDIICHVDAAPAQIEAPVKAGGKVELQWTPWPVSHKGPVIDYLANCNGPCETVDKTKLQWFKIDQVGLISPTAETSGLWGTDVLIANNNSWTVTIPSDIATGNYVLRHEIIALHSASSVNGAQNYPQCVNLAIKGTGTAKPAGVSATSFYTPTDPGIQFSLYGTLTSYTIPGPALYSGAISVTQTLPAAPTASATGVYTVS</sequence>
<protein>
    <recommendedName>
        <fullName evidence="8">AA9 family lytic polysaccharide monooxygenase I</fullName>
        <shortName evidence="8">AA9I</shortName>
        <ecNumber evidence="10">1.14.99.56</ecNumber>
    </recommendedName>
    <alternativeName>
        <fullName evidence="9">Endo-1,4-beta-glucanase AA9I</fullName>
        <shortName evidence="9">Endoglucanase AA9I</shortName>
    </alternativeName>
    <alternativeName>
        <fullName evidence="9">Glycosyl hydrolase 61 family protein AA9I</fullName>
    </alternativeName>
</protein>
<keyword id="KW-0119">Carbohydrate metabolism</keyword>
<keyword id="KW-0136">Cellulose degradation</keyword>
<keyword id="KW-0186">Copper</keyword>
<keyword id="KW-1015">Disulfide bond</keyword>
<keyword id="KW-0325">Glycoprotein</keyword>
<keyword id="KW-0479">Metal-binding</keyword>
<keyword id="KW-0503">Monooxygenase</keyword>
<keyword id="KW-0560">Oxidoreductase</keyword>
<keyword id="KW-0624">Polysaccharide degradation</keyword>
<keyword id="KW-1185">Reference proteome</keyword>
<keyword id="KW-0964">Secreted</keyword>
<keyword id="KW-0732">Signal</keyword>
<accession>A0A384J8V9</accession>
<organism>
    <name type="scientific">Botryotinia fuckeliana (strain B05.10)</name>
    <name type="common">Noble rot fungus</name>
    <name type="synonym">Botrytis cinerea</name>
    <dbReference type="NCBI Taxonomy" id="332648"/>
    <lineage>
        <taxon>Eukaryota</taxon>
        <taxon>Fungi</taxon>
        <taxon>Dikarya</taxon>
        <taxon>Ascomycota</taxon>
        <taxon>Pezizomycotina</taxon>
        <taxon>Leotiomycetes</taxon>
        <taxon>Helotiales</taxon>
        <taxon>Sclerotiniaceae</taxon>
        <taxon>Botrytis</taxon>
    </lineage>
</organism>
<comment type="function">
    <text evidence="10">Lytic polysaccharide monooxygenase (LPMO) that depolymerizes crystalline and amorphous polysaccharides via the oxidation of scissile alpha- or beta-(1-4)-glycosidic bonds, yielding C1 and C4 oxidation products (Probable). Catalysis by LPMOs requires the reduction of the active-site copper from Cu(II) to Cu(I) by a reducing agent and H(2)O(2) or O(2) as a cosubstrate (Probable).</text>
</comment>
<comment type="catalytic activity">
    <reaction evidence="10">
        <text>[(1-&gt;4)-beta-D-glucosyl]n+m + reduced acceptor + O2 = 4-dehydro-beta-D-glucosyl-[(1-&gt;4)-beta-D-glucosyl]n-1 + [(1-&gt;4)-beta-D-glucosyl]m + acceptor + H2O.</text>
        <dbReference type="EC" id="1.14.99.56"/>
    </reaction>
</comment>
<comment type="cofactor">
    <cofactor evidence="10">
        <name>Cu(2+)</name>
        <dbReference type="ChEBI" id="CHEBI:29036"/>
    </cofactor>
    <text evidence="10">Binds 1 copper ion per subunit.</text>
</comment>
<comment type="subcellular location">
    <subcellularLocation>
        <location evidence="10">Secreted</location>
    </subcellularLocation>
</comment>
<comment type="induction">
    <text evidence="7">Expression is not induced in cellulose-inducible conditions (in Avicel- and wheat bran-containing complex medium).</text>
</comment>
<comment type="biotechnology">
    <text evidence="10">Lignocellulose is the most abundant polymeric composite on Earth and is a recalcitrant but promising renewable substrate for industrial biotechnology applications. Together with cellobiose dehydrogenases (CDHs) an enzymatic system capable of oxidative cellulose cleavage is formed, which increases the efficiency of cellulases and put LPMOs at focus of biofuel research.</text>
</comment>
<comment type="similarity">
    <text evidence="9">Belongs to the polysaccharide monooxygenase AA9 family.</text>
</comment>
<gene>
    <name evidence="8" type="primary">AA9I</name>
    <name type="ORF">BCIN_02g02040</name>
</gene>